<feature type="chain" id="PRO_0000244161" description="Ribosome maturation factor RimM">
    <location>
        <begin position="1"/>
        <end position="166"/>
    </location>
</feature>
<feature type="domain" description="PRC barrel" evidence="1">
    <location>
        <begin position="94"/>
        <end position="166"/>
    </location>
</feature>
<protein>
    <recommendedName>
        <fullName evidence="1">Ribosome maturation factor RimM</fullName>
    </recommendedName>
</protein>
<comment type="function">
    <text evidence="1">An accessory protein needed during the final step in the assembly of 30S ribosomal subunit, possibly for assembly of the head region. Essential for efficient processing of 16S rRNA. May be needed both before and after RbfA during the maturation of 16S rRNA. It has affinity for free ribosomal 30S subunits but not for 70S ribosomes.</text>
</comment>
<comment type="subunit">
    <text evidence="1">Binds ribosomal protein uS19.</text>
</comment>
<comment type="subcellular location">
    <subcellularLocation>
        <location evidence="1">Cytoplasm</location>
    </subcellularLocation>
</comment>
<comment type="domain">
    <text evidence="1">The PRC barrel domain binds ribosomal protein uS19.</text>
</comment>
<comment type="similarity">
    <text evidence="1">Belongs to the RimM family.</text>
</comment>
<keyword id="KW-0143">Chaperone</keyword>
<keyword id="KW-0963">Cytoplasm</keyword>
<keyword id="KW-0690">Ribosome biogenesis</keyword>
<keyword id="KW-0698">rRNA processing</keyword>
<dbReference type="EMBL" id="CP000087">
    <property type="protein sequence ID" value="ABE04849.1"/>
    <property type="molecule type" value="Genomic_DNA"/>
</dbReference>
<dbReference type="RefSeq" id="WP_011477436.1">
    <property type="nucleotide sequence ID" value="NC_007940.1"/>
</dbReference>
<dbReference type="SMR" id="Q1RIG5"/>
<dbReference type="KEGG" id="rbe:RBE_0768"/>
<dbReference type="eggNOG" id="COG0806">
    <property type="taxonomic scope" value="Bacteria"/>
</dbReference>
<dbReference type="HOGENOM" id="CLU_077636_0_1_5"/>
<dbReference type="OrthoDB" id="9788191at2"/>
<dbReference type="Proteomes" id="UP000001951">
    <property type="component" value="Chromosome"/>
</dbReference>
<dbReference type="GO" id="GO:0005737">
    <property type="term" value="C:cytoplasm"/>
    <property type="evidence" value="ECO:0007669"/>
    <property type="project" value="UniProtKB-SubCell"/>
</dbReference>
<dbReference type="GO" id="GO:0005840">
    <property type="term" value="C:ribosome"/>
    <property type="evidence" value="ECO:0007669"/>
    <property type="project" value="InterPro"/>
</dbReference>
<dbReference type="GO" id="GO:0043022">
    <property type="term" value="F:ribosome binding"/>
    <property type="evidence" value="ECO:0007669"/>
    <property type="project" value="InterPro"/>
</dbReference>
<dbReference type="GO" id="GO:0042274">
    <property type="term" value="P:ribosomal small subunit biogenesis"/>
    <property type="evidence" value="ECO:0007669"/>
    <property type="project" value="UniProtKB-UniRule"/>
</dbReference>
<dbReference type="GO" id="GO:0006364">
    <property type="term" value="P:rRNA processing"/>
    <property type="evidence" value="ECO:0007669"/>
    <property type="project" value="UniProtKB-UniRule"/>
</dbReference>
<dbReference type="Gene3D" id="2.30.30.240">
    <property type="entry name" value="PRC-barrel domain"/>
    <property type="match status" value="1"/>
</dbReference>
<dbReference type="Gene3D" id="2.40.30.60">
    <property type="entry name" value="RimM"/>
    <property type="match status" value="1"/>
</dbReference>
<dbReference type="HAMAP" id="MF_00014">
    <property type="entry name" value="Ribosome_mat_RimM"/>
    <property type="match status" value="1"/>
</dbReference>
<dbReference type="InterPro" id="IPR027275">
    <property type="entry name" value="PRC-brl_dom"/>
</dbReference>
<dbReference type="InterPro" id="IPR011033">
    <property type="entry name" value="PRC_barrel-like_sf"/>
</dbReference>
<dbReference type="InterPro" id="IPR011961">
    <property type="entry name" value="RimM"/>
</dbReference>
<dbReference type="InterPro" id="IPR002676">
    <property type="entry name" value="RimM_N"/>
</dbReference>
<dbReference type="InterPro" id="IPR036976">
    <property type="entry name" value="RimM_N_sf"/>
</dbReference>
<dbReference type="InterPro" id="IPR009000">
    <property type="entry name" value="Transl_B-barrel_sf"/>
</dbReference>
<dbReference type="NCBIfam" id="TIGR02273">
    <property type="entry name" value="16S_RimM"/>
    <property type="match status" value="1"/>
</dbReference>
<dbReference type="PANTHER" id="PTHR33692">
    <property type="entry name" value="RIBOSOME MATURATION FACTOR RIMM"/>
    <property type="match status" value="1"/>
</dbReference>
<dbReference type="PANTHER" id="PTHR33692:SF1">
    <property type="entry name" value="RIBOSOME MATURATION FACTOR RIMM"/>
    <property type="match status" value="1"/>
</dbReference>
<dbReference type="Pfam" id="PF05239">
    <property type="entry name" value="PRC"/>
    <property type="match status" value="1"/>
</dbReference>
<dbReference type="Pfam" id="PF01782">
    <property type="entry name" value="RimM"/>
    <property type="match status" value="1"/>
</dbReference>
<dbReference type="SUPFAM" id="SSF50346">
    <property type="entry name" value="PRC-barrel domain"/>
    <property type="match status" value="1"/>
</dbReference>
<dbReference type="SUPFAM" id="SSF50447">
    <property type="entry name" value="Translation proteins"/>
    <property type="match status" value="1"/>
</dbReference>
<accession>Q1RIG5</accession>
<evidence type="ECO:0000255" key="1">
    <source>
        <dbReference type="HAMAP-Rule" id="MF_00014"/>
    </source>
</evidence>
<organism>
    <name type="scientific">Rickettsia bellii (strain RML369-C)</name>
    <dbReference type="NCBI Taxonomy" id="336407"/>
    <lineage>
        <taxon>Bacteria</taxon>
        <taxon>Pseudomonadati</taxon>
        <taxon>Pseudomonadota</taxon>
        <taxon>Alphaproteobacteria</taxon>
        <taxon>Rickettsiales</taxon>
        <taxon>Rickettsiaceae</taxon>
        <taxon>Rickettsieae</taxon>
        <taxon>Rickettsia</taxon>
        <taxon>belli group</taxon>
    </lineage>
</organism>
<gene>
    <name evidence="1" type="primary">rimM</name>
    <name type="ordered locus">RBE_0768</name>
</gene>
<sequence>MDSLENLILVGVIKSCHGIKGHIILRSFTDPTVKITERELVNESGEKVNINLIKQNSKGELICQFNDISTRNEAANLKGYKLFCLRSSLPKLEEDEFYITDLNNLPILDNNHTEIGKIKNILNFGAGDIIEVEFLDKTTELLPFNKDFFPIITKDYAILNYKRDEL</sequence>
<reference key="1">
    <citation type="journal article" date="2006" name="PLoS Genet.">
        <title>Genome sequence of Rickettsia bellii illuminates the role of amoebae in gene exchanges between intracellular pathogens.</title>
        <authorList>
            <person name="Ogata H."/>
            <person name="La Scola B."/>
            <person name="Audic S."/>
            <person name="Renesto P."/>
            <person name="Blanc G."/>
            <person name="Robert C."/>
            <person name="Fournier P.-E."/>
            <person name="Claverie J.-M."/>
            <person name="Raoult D."/>
        </authorList>
    </citation>
    <scope>NUCLEOTIDE SEQUENCE [LARGE SCALE GENOMIC DNA]</scope>
    <source>
        <strain>RML369-C</strain>
    </source>
</reference>
<name>RIMM_RICBR</name>
<proteinExistence type="inferred from homology"/>